<protein>
    <recommendedName>
        <fullName>Potassium channel toxin alpha-KTx 6 OcyKTx5</fullName>
    </recommendedName>
</protein>
<dbReference type="GO" id="GO:0005576">
    <property type="term" value="C:extracellular region"/>
    <property type="evidence" value="ECO:0007669"/>
    <property type="project" value="UniProtKB-SubCell"/>
</dbReference>
<dbReference type="GO" id="GO:0008200">
    <property type="term" value="F:ion channel inhibitor activity"/>
    <property type="evidence" value="ECO:0007669"/>
    <property type="project" value="InterPro"/>
</dbReference>
<dbReference type="GO" id="GO:0015459">
    <property type="term" value="F:potassium channel regulator activity"/>
    <property type="evidence" value="ECO:0007669"/>
    <property type="project" value="UniProtKB-KW"/>
</dbReference>
<dbReference type="GO" id="GO:0090729">
    <property type="term" value="F:toxin activity"/>
    <property type="evidence" value="ECO:0007669"/>
    <property type="project" value="UniProtKB-KW"/>
</dbReference>
<dbReference type="Gene3D" id="3.30.30.10">
    <property type="entry name" value="Knottin, scorpion toxin-like"/>
    <property type="match status" value="1"/>
</dbReference>
<dbReference type="InterPro" id="IPR036574">
    <property type="entry name" value="Scorpion_toxin-like_sf"/>
</dbReference>
<dbReference type="InterPro" id="IPR001947">
    <property type="entry name" value="Scorpion_toxinS_K_inh"/>
</dbReference>
<dbReference type="Pfam" id="PF00451">
    <property type="entry name" value="Toxin_2"/>
    <property type="match status" value="1"/>
</dbReference>
<dbReference type="SUPFAM" id="SSF57095">
    <property type="entry name" value="Scorpion toxin-like"/>
    <property type="match status" value="1"/>
</dbReference>
<name>KAX6Y_OPICY</name>
<evidence type="ECO:0000250" key="1">
    <source>
        <dbReference type="UniProtKB" id="P58498"/>
    </source>
</evidence>
<evidence type="ECO:0000255" key="2"/>
<evidence type="ECO:0000269" key="3">
    <source>
    </source>
</evidence>
<evidence type="ECO:0000303" key="4">
    <source>
    </source>
</evidence>
<evidence type="ECO:0000305" key="5"/>
<evidence type="ECO:0000305" key="6">
    <source>
    </source>
</evidence>
<sequence length="24" mass="2584">IRCTGSKECYSPCYKATGCPNAKC</sequence>
<comment type="function">
    <text evidence="1">Blocks voltage-gated potassium channels.</text>
</comment>
<comment type="subcellular location">
    <subcellularLocation>
        <location evidence="3">Secreted</location>
    </subcellularLocation>
</comment>
<comment type="tissue specificity">
    <text evidence="3">Expressed by the venom gland.</text>
</comment>
<comment type="domain">
    <text evidence="5">Has the structural arrangement of an alpha-helix connected to antiparallel beta-sheets by disulfide bonds (CS-alpha/beta).</text>
</comment>
<comment type="miscellaneous">
    <text evidence="6">This peptide elutes at 21.22 minutes and comes from a fraction that contains 2 components (PubMed:18502464).</text>
</comment>
<comment type="similarity">
    <text evidence="2">Belongs to the short scorpion toxin superfamily. Potassium channel inhibitor family. Alpha-KTx 06 subfamily.</text>
</comment>
<accession>P86106</accession>
<proteinExistence type="evidence at protein level"/>
<organism>
    <name type="scientific">Opisthacanthus cayaporum</name>
    <name type="common">South American scorpion</name>
    <dbReference type="NCBI Taxonomy" id="573324"/>
    <lineage>
        <taxon>Eukaryota</taxon>
        <taxon>Metazoa</taxon>
        <taxon>Ecdysozoa</taxon>
        <taxon>Arthropoda</taxon>
        <taxon>Chelicerata</taxon>
        <taxon>Arachnida</taxon>
        <taxon>Scorpiones</taxon>
        <taxon>Iurida</taxon>
        <taxon>Scorpionoidea</taxon>
        <taxon>Hemiscorpiidae</taxon>
        <taxon>Opisthacanthus</taxon>
    </lineage>
</organism>
<keyword id="KW-0903">Direct protein sequencing</keyword>
<keyword id="KW-1015">Disulfide bond</keyword>
<keyword id="KW-0872">Ion channel impairing toxin</keyword>
<keyword id="KW-0632">Potassium channel impairing toxin</keyword>
<keyword id="KW-0964">Secreted</keyword>
<keyword id="KW-0800">Toxin</keyword>
<feature type="peptide" id="PRO_0000398133" description="Potassium channel toxin alpha-KTx 6 OcyKTx5" evidence="6">
    <location>
        <begin position="1"/>
        <end position="24" status="greater than"/>
    </location>
</feature>
<feature type="disulfide bond" evidence="1">
    <location>
        <begin position="3"/>
        <end position="24"/>
    </location>
</feature>
<feature type="disulfide bond" evidence="1">
    <location>
        <begin position="9"/>
        <end status="unknown"/>
    </location>
</feature>
<feature type="disulfide bond" evidence="1">
    <location>
        <begin position="13"/>
        <end status="unknown"/>
    </location>
</feature>
<feature type="disulfide bond" evidence="1">
    <location>
        <begin position="19"/>
        <end status="unknown"/>
    </location>
</feature>
<feature type="non-terminal residue" evidence="4">
    <location>
        <position position="24"/>
    </location>
</feature>
<reference key="1">
    <citation type="journal article" date="2008" name="Toxicon">
        <title>Mass spectrometry analysis, amino acid sequence and biological activity of venom components from the Brazilian scorpion Opisthacanthus cayaporum.</title>
        <authorList>
            <person name="Schwartz E.F."/>
            <person name="Camargos T.S."/>
            <person name="Zamudio F.Z."/>
            <person name="Silva L.P."/>
            <person name="Bloch C. Jr."/>
            <person name="Caixeta F."/>
            <person name="Schwartz C.A."/>
            <person name="Possani L.D."/>
        </authorList>
    </citation>
    <scope>PROTEIN SEQUENCE</scope>
    <scope>SUBCELLULAR LOCATION</scope>
    <scope>TISSUE SPECIFICITY</scope>
    <source>
        <tissue>Venom</tissue>
    </source>
</reference>